<evidence type="ECO:0000255" key="1">
    <source>
        <dbReference type="HAMAP-Rule" id="MF_01535"/>
    </source>
</evidence>
<keyword id="KW-0067">ATP-binding</keyword>
<keyword id="KW-1015">Disulfide bond</keyword>
<keyword id="KW-0418">Kinase</keyword>
<keyword id="KW-0460">Magnesium</keyword>
<keyword id="KW-0547">Nucleotide-binding</keyword>
<keyword id="KW-0684">Rhamnose metabolism</keyword>
<keyword id="KW-0808">Transferase</keyword>
<proteinExistence type="inferred from homology"/>
<organism>
    <name type="scientific">Salmonella choleraesuis (strain SC-B67)</name>
    <dbReference type="NCBI Taxonomy" id="321314"/>
    <lineage>
        <taxon>Bacteria</taxon>
        <taxon>Pseudomonadati</taxon>
        <taxon>Pseudomonadota</taxon>
        <taxon>Gammaproteobacteria</taxon>
        <taxon>Enterobacterales</taxon>
        <taxon>Enterobacteriaceae</taxon>
        <taxon>Salmonella</taxon>
    </lineage>
</organism>
<protein>
    <recommendedName>
        <fullName evidence="1">Rhamnulokinase</fullName>
        <shortName evidence="1">RhaB</shortName>
        <ecNumber evidence="1">2.7.1.5</ecNumber>
    </recommendedName>
    <alternativeName>
        <fullName evidence="1">ATP:L-rhamnulose phosphotransferase</fullName>
    </alternativeName>
    <alternativeName>
        <fullName evidence="1">L-rhamnulose 1-kinase</fullName>
    </alternativeName>
    <alternativeName>
        <fullName evidence="1">Rhamnulose kinase</fullName>
    </alternativeName>
</protein>
<comment type="function">
    <text evidence="1">Involved in the catabolism of L-rhamnose (6-deoxy-L-mannose). Catalyzes the transfer of the gamma-phosphate group from ATP to the 1-hydroxyl group of L-rhamnulose to yield L-rhamnulose 1-phosphate.</text>
</comment>
<comment type="catalytic activity">
    <reaction evidence="1">
        <text>L-rhamnulose + ATP = L-rhamnulose 1-phosphate + ADP + H(+)</text>
        <dbReference type="Rhea" id="RHEA:20117"/>
        <dbReference type="ChEBI" id="CHEBI:15378"/>
        <dbReference type="ChEBI" id="CHEBI:17897"/>
        <dbReference type="ChEBI" id="CHEBI:30616"/>
        <dbReference type="ChEBI" id="CHEBI:58313"/>
        <dbReference type="ChEBI" id="CHEBI:456216"/>
        <dbReference type="EC" id="2.7.1.5"/>
    </reaction>
</comment>
<comment type="cofactor">
    <cofactor evidence="1">
        <name>Mg(2+)</name>
        <dbReference type="ChEBI" id="CHEBI:18420"/>
    </cofactor>
</comment>
<comment type="pathway">
    <text evidence="1">Carbohydrate degradation; L-rhamnose degradation; glycerone phosphate from L-rhamnose: step 2/3.</text>
</comment>
<comment type="similarity">
    <text evidence="1">Belongs to the rhamnulokinase family.</text>
</comment>
<gene>
    <name evidence="1" type="primary">rhaB</name>
    <name type="ordered locus">SCH_3937</name>
</gene>
<sequence>MTFRHCVAVDLGASSGRVMLARYDSKHRTLTLREIHRFVNCLQKTDGFDTWDIDSLEKDIRLGLKKVCNEGILIDSIGIDTWGVDYVLLDKQGQRVGLPVSYRDNRTTGIMPQALVQIGKSEIYRRSGIQFLPFNTIYQLRALTKQQPELTAQVAHALLMPDYFSYRLTGEMNWEYTNATTTQLVNINTDDWDDTLLAWTGAKKSWFGRPSHPGNVIGDWICPQGNRIPVVAVASHDTASAVIASPLANKHSAYLSSGTWSLMGFESKMPYTTDEALAANITNEGGAEGRYRVLKNIMGLWLLQRVLKERRITDLPALIAQTEALPACRFLINPNDDRFINPDDMRAEIQAVCRETDQPVPVSDAELARCIFDSLALLYADILHELANLRGEKFTQLHIVGGGCQNSLLNQLCADACGIRVIAGPVEASTLGNIGIQLMTLDELNNVDDFRQVVSANYDLTTYIPNPDSEIARHVAQFQPKRQTKELCA</sequence>
<dbReference type="EC" id="2.7.1.5" evidence="1"/>
<dbReference type="EMBL" id="AE017220">
    <property type="protein sequence ID" value="AAX67843.1"/>
    <property type="molecule type" value="Genomic_DNA"/>
</dbReference>
<dbReference type="RefSeq" id="WP_000143971.1">
    <property type="nucleotide sequence ID" value="NC_006905.1"/>
</dbReference>
<dbReference type="SMR" id="Q57HG9"/>
<dbReference type="KEGG" id="sec:SCH_3937"/>
<dbReference type="HOGENOM" id="CLU_039395_0_0_6"/>
<dbReference type="UniPathway" id="UPA00541">
    <property type="reaction ID" value="UER00602"/>
</dbReference>
<dbReference type="Proteomes" id="UP000000538">
    <property type="component" value="Chromosome"/>
</dbReference>
<dbReference type="GO" id="GO:0005829">
    <property type="term" value="C:cytosol"/>
    <property type="evidence" value="ECO:0007669"/>
    <property type="project" value="TreeGrafter"/>
</dbReference>
<dbReference type="GO" id="GO:0005524">
    <property type="term" value="F:ATP binding"/>
    <property type="evidence" value="ECO:0007669"/>
    <property type="project" value="UniProtKB-KW"/>
</dbReference>
<dbReference type="GO" id="GO:0004370">
    <property type="term" value="F:glycerol kinase activity"/>
    <property type="evidence" value="ECO:0007669"/>
    <property type="project" value="TreeGrafter"/>
</dbReference>
<dbReference type="GO" id="GO:0008993">
    <property type="term" value="F:rhamnulokinase activity"/>
    <property type="evidence" value="ECO:0007669"/>
    <property type="project" value="UniProtKB-UniRule"/>
</dbReference>
<dbReference type="GO" id="GO:0006071">
    <property type="term" value="P:glycerol metabolic process"/>
    <property type="evidence" value="ECO:0007669"/>
    <property type="project" value="TreeGrafter"/>
</dbReference>
<dbReference type="GO" id="GO:0019301">
    <property type="term" value="P:rhamnose catabolic process"/>
    <property type="evidence" value="ECO:0007669"/>
    <property type="project" value="UniProtKB-UniRule"/>
</dbReference>
<dbReference type="CDD" id="cd07771">
    <property type="entry name" value="ASKHA_NBD_FGGY_RhaB-like"/>
    <property type="match status" value="1"/>
</dbReference>
<dbReference type="FunFam" id="3.30.420.40:FF:000064">
    <property type="entry name" value="Rhamnulokinase"/>
    <property type="match status" value="1"/>
</dbReference>
<dbReference type="FunFam" id="3.30.420.40:FF:000073">
    <property type="entry name" value="Rhamnulokinase"/>
    <property type="match status" value="1"/>
</dbReference>
<dbReference type="Gene3D" id="3.30.420.40">
    <property type="match status" value="2"/>
</dbReference>
<dbReference type="HAMAP" id="MF_01535">
    <property type="entry name" value="Rhamnulokinase"/>
    <property type="match status" value="1"/>
</dbReference>
<dbReference type="InterPro" id="IPR043129">
    <property type="entry name" value="ATPase_NBD"/>
</dbReference>
<dbReference type="InterPro" id="IPR018485">
    <property type="entry name" value="FGGY_C"/>
</dbReference>
<dbReference type="InterPro" id="IPR018484">
    <property type="entry name" value="FGGY_N"/>
</dbReference>
<dbReference type="InterPro" id="IPR013449">
    <property type="entry name" value="Rhamnulokinase"/>
</dbReference>
<dbReference type="NCBIfam" id="NF007925">
    <property type="entry name" value="PRK10640.1"/>
    <property type="match status" value="1"/>
</dbReference>
<dbReference type="NCBIfam" id="TIGR02627">
    <property type="entry name" value="rhamnulo_kin"/>
    <property type="match status" value="1"/>
</dbReference>
<dbReference type="PANTHER" id="PTHR10196:SF93">
    <property type="entry name" value="L-RHAMNULOKINASE"/>
    <property type="match status" value="1"/>
</dbReference>
<dbReference type="PANTHER" id="PTHR10196">
    <property type="entry name" value="SUGAR KINASE"/>
    <property type="match status" value="1"/>
</dbReference>
<dbReference type="Pfam" id="PF02782">
    <property type="entry name" value="FGGY_C"/>
    <property type="match status" value="1"/>
</dbReference>
<dbReference type="Pfam" id="PF00370">
    <property type="entry name" value="FGGY_N"/>
    <property type="match status" value="1"/>
</dbReference>
<dbReference type="SUPFAM" id="SSF53067">
    <property type="entry name" value="Actin-like ATPase domain"/>
    <property type="match status" value="2"/>
</dbReference>
<reference key="1">
    <citation type="journal article" date="2005" name="Nucleic Acids Res.">
        <title>The genome sequence of Salmonella enterica serovar Choleraesuis, a highly invasive and resistant zoonotic pathogen.</title>
        <authorList>
            <person name="Chiu C.-H."/>
            <person name="Tang P."/>
            <person name="Chu C."/>
            <person name="Hu S."/>
            <person name="Bao Q."/>
            <person name="Yu J."/>
            <person name="Chou Y.-Y."/>
            <person name="Wang H.-S."/>
            <person name="Lee Y.-S."/>
        </authorList>
    </citation>
    <scope>NUCLEOTIDE SEQUENCE [LARGE SCALE GENOMIC DNA]</scope>
    <source>
        <strain>SC-B67</strain>
    </source>
</reference>
<name>RHAB_SALCH</name>
<accession>Q57HG9</accession>
<feature type="chain" id="PRO_0000090542" description="Rhamnulokinase">
    <location>
        <begin position="1"/>
        <end position="489"/>
    </location>
</feature>
<feature type="active site" description="Proton acceptor" evidence="1">
    <location>
        <position position="237"/>
    </location>
</feature>
<feature type="binding site" evidence="1">
    <location>
        <begin position="13"/>
        <end position="17"/>
    </location>
    <ligand>
        <name>ATP</name>
        <dbReference type="ChEBI" id="CHEBI:30616"/>
    </ligand>
</feature>
<feature type="binding site" evidence="1">
    <location>
        <position position="83"/>
    </location>
    <ligand>
        <name>substrate</name>
    </ligand>
</feature>
<feature type="binding site" evidence="1">
    <location>
        <begin position="236"/>
        <end position="238"/>
    </location>
    <ligand>
        <name>substrate</name>
    </ligand>
</feature>
<feature type="binding site" evidence="1">
    <location>
        <position position="259"/>
    </location>
    <ligand>
        <name>ATP</name>
        <dbReference type="ChEBI" id="CHEBI:30616"/>
    </ligand>
</feature>
<feature type="binding site" evidence="1">
    <location>
        <position position="296"/>
    </location>
    <ligand>
        <name>substrate</name>
    </ligand>
</feature>
<feature type="binding site" evidence="1">
    <location>
        <position position="304"/>
    </location>
    <ligand>
        <name>ATP</name>
        <dbReference type="ChEBI" id="CHEBI:30616"/>
    </ligand>
</feature>
<feature type="binding site" evidence="1">
    <location>
        <position position="402"/>
    </location>
    <ligand>
        <name>ATP</name>
        <dbReference type="ChEBI" id="CHEBI:30616"/>
    </ligand>
</feature>
<feature type="disulfide bond" evidence="1">
    <location>
        <begin position="68"/>
        <end position="222"/>
    </location>
</feature>
<feature type="disulfide bond" evidence="1">
    <location>
        <begin position="353"/>
        <end position="370"/>
    </location>
</feature>
<feature type="disulfide bond" evidence="1">
    <location>
        <begin position="413"/>
        <end position="417"/>
    </location>
</feature>